<proteinExistence type="inferred from homology"/>
<organism>
    <name type="scientific">Helicobacter hepaticus (strain ATCC 51449 / 3B1)</name>
    <dbReference type="NCBI Taxonomy" id="235279"/>
    <lineage>
        <taxon>Bacteria</taxon>
        <taxon>Pseudomonadati</taxon>
        <taxon>Campylobacterota</taxon>
        <taxon>Epsilonproteobacteria</taxon>
        <taxon>Campylobacterales</taxon>
        <taxon>Helicobacteraceae</taxon>
        <taxon>Helicobacter</taxon>
    </lineage>
</organism>
<feature type="chain" id="PRO_0000112931" description="Ornithine carbamoyltransferase">
    <location>
        <begin position="1"/>
        <end position="329"/>
    </location>
</feature>
<feature type="binding site" evidence="2">
    <location>
        <begin position="51"/>
        <end position="54"/>
    </location>
    <ligand>
        <name>carbamoyl phosphate</name>
        <dbReference type="ChEBI" id="CHEBI:58228"/>
    </ligand>
</feature>
<feature type="binding site" evidence="2">
    <location>
        <position position="78"/>
    </location>
    <ligand>
        <name>carbamoyl phosphate</name>
        <dbReference type="ChEBI" id="CHEBI:58228"/>
    </ligand>
</feature>
<feature type="binding site" evidence="2">
    <location>
        <position position="102"/>
    </location>
    <ligand>
        <name>carbamoyl phosphate</name>
        <dbReference type="ChEBI" id="CHEBI:58228"/>
    </ligand>
</feature>
<feature type="binding site" evidence="2">
    <location>
        <begin position="129"/>
        <end position="132"/>
    </location>
    <ligand>
        <name>carbamoyl phosphate</name>
        <dbReference type="ChEBI" id="CHEBI:58228"/>
    </ligand>
</feature>
<feature type="binding site" evidence="2">
    <location>
        <position position="174"/>
    </location>
    <ligand>
        <name>L-ornithine</name>
        <dbReference type="ChEBI" id="CHEBI:46911"/>
    </ligand>
</feature>
<feature type="binding site" evidence="2">
    <location>
        <position position="238"/>
    </location>
    <ligand>
        <name>L-ornithine</name>
        <dbReference type="ChEBI" id="CHEBI:46911"/>
    </ligand>
</feature>
<feature type="binding site" evidence="2">
    <location>
        <begin position="242"/>
        <end position="243"/>
    </location>
    <ligand>
        <name>L-ornithine</name>
        <dbReference type="ChEBI" id="CHEBI:46911"/>
    </ligand>
</feature>
<feature type="binding site" evidence="2">
    <location>
        <begin position="278"/>
        <end position="279"/>
    </location>
    <ligand>
        <name>carbamoyl phosphate</name>
        <dbReference type="ChEBI" id="CHEBI:58228"/>
    </ligand>
</feature>
<feature type="binding site" evidence="2">
    <location>
        <position position="306"/>
    </location>
    <ligand>
        <name>carbamoyl phosphate</name>
        <dbReference type="ChEBI" id="CHEBI:58228"/>
    </ligand>
</feature>
<name>OTC_HELHP</name>
<reference key="1">
    <citation type="journal article" date="2003" name="Proc. Natl. Acad. Sci. U.S.A.">
        <title>The complete genome sequence of the carcinogenic bacterium Helicobacter hepaticus.</title>
        <authorList>
            <person name="Suerbaum S."/>
            <person name="Josenhans C."/>
            <person name="Sterzenbach T."/>
            <person name="Drescher B."/>
            <person name="Brandt P."/>
            <person name="Bell M."/>
            <person name="Droege M."/>
            <person name="Fartmann B."/>
            <person name="Fischer H.-P."/>
            <person name="Ge Z."/>
            <person name="Hoerster A."/>
            <person name="Holland R."/>
            <person name="Klein K."/>
            <person name="Koenig J."/>
            <person name="Macko L."/>
            <person name="Mendz G.L."/>
            <person name="Nyakatura G."/>
            <person name="Schauer D.B."/>
            <person name="Shen Z."/>
            <person name="Weber J."/>
            <person name="Frosch M."/>
            <person name="Fox J.G."/>
        </authorList>
    </citation>
    <scope>NUCLEOTIDE SEQUENCE [LARGE SCALE GENOMIC DNA]</scope>
    <source>
        <strain>ATCC 51449 / 3B1</strain>
    </source>
</reference>
<sequence length="329" mass="36579">MKHFLTLNDFNRDEILAMVDVALELKYESLHIGNKPYLKGKVLAMIFEKSSTRTRVSFESGIFQLGGQGIFLSHKDIQLGRGEPIKDTARVISSMVDMIMMRTSEHSRLEEFASYSSVPVINGLSDDFHPVQLIADYLTMIECGIYLTHHNPLYPTKGKGGRNPIVAYIGDGNNMAHSWINLAGILGFELRIASPIGYAPKADIITKAQDMCIQSGGKIKILNDAKEAVSNANVVVTDTWASMGQEEQKEQRKCAFANFCVDEAMMSYAQKDAIFLHCLPAYRGQEVSEGVLEGAQSKVFQEAQNRLHAQKGIMLYLARINKIPLVSVE</sequence>
<comment type="function">
    <text evidence="1">Reversibly catalyzes the transfer of the carbamoyl group from carbamoyl phosphate (CP) to the N(epsilon) atom of ornithine (ORN) to produce L-citrulline.</text>
</comment>
<comment type="catalytic activity">
    <reaction evidence="2">
        <text>carbamoyl phosphate + L-ornithine = L-citrulline + phosphate + H(+)</text>
        <dbReference type="Rhea" id="RHEA:19513"/>
        <dbReference type="ChEBI" id="CHEBI:15378"/>
        <dbReference type="ChEBI" id="CHEBI:43474"/>
        <dbReference type="ChEBI" id="CHEBI:46911"/>
        <dbReference type="ChEBI" id="CHEBI:57743"/>
        <dbReference type="ChEBI" id="CHEBI:58228"/>
        <dbReference type="EC" id="2.1.3.3"/>
    </reaction>
</comment>
<comment type="pathway">
    <text evidence="2">Amino-acid biosynthesis; L-arginine biosynthesis; L-arginine from L-ornithine and carbamoyl phosphate: step 1/3.</text>
</comment>
<comment type="subcellular location">
    <subcellularLocation>
        <location evidence="2">Cytoplasm</location>
    </subcellularLocation>
</comment>
<comment type="similarity">
    <text evidence="2">Belongs to the aspartate/ornithine carbamoyltransferase superfamily. OTCase family.</text>
</comment>
<protein>
    <recommendedName>
        <fullName evidence="2">Ornithine carbamoyltransferase</fullName>
        <shortName evidence="2">OTCase</shortName>
        <ecNumber evidence="2">2.1.3.3</ecNumber>
    </recommendedName>
</protein>
<gene>
    <name evidence="2" type="primary">argF</name>
    <name type="ordered locus">HH_0977</name>
</gene>
<keyword id="KW-0028">Amino-acid biosynthesis</keyword>
<keyword id="KW-0055">Arginine biosynthesis</keyword>
<keyword id="KW-0963">Cytoplasm</keyword>
<keyword id="KW-1185">Reference proteome</keyword>
<keyword id="KW-0808">Transferase</keyword>
<accession>Q7VHJ0</accession>
<evidence type="ECO:0000250" key="1"/>
<evidence type="ECO:0000255" key="2">
    <source>
        <dbReference type="HAMAP-Rule" id="MF_01109"/>
    </source>
</evidence>
<dbReference type="EC" id="2.1.3.3" evidence="2"/>
<dbReference type="EMBL" id="AE017125">
    <property type="protein sequence ID" value="AAP77574.1"/>
    <property type="molecule type" value="Genomic_DNA"/>
</dbReference>
<dbReference type="RefSeq" id="WP_011115817.1">
    <property type="nucleotide sequence ID" value="NC_004917.1"/>
</dbReference>
<dbReference type="SMR" id="Q7VHJ0"/>
<dbReference type="STRING" id="235279.HH_0977"/>
<dbReference type="KEGG" id="hhe:HH_0977"/>
<dbReference type="eggNOG" id="COG0078">
    <property type="taxonomic scope" value="Bacteria"/>
</dbReference>
<dbReference type="HOGENOM" id="CLU_043846_3_2_7"/>
<dbReference type="OrthoDB" id="9802587at2"/>
<dbReference type="UniPathway" id="UPA00068">
    <property type="reaction ID" value="UER00112"/>
</dbReference>
<dbReference type="Proteomes" id="UP000002495">
    <property type="component" value="Chromosome"/>
</dbReference>
<dbReference type="GO" id="GO:0005737">
    <property type="term" value="C:cytoplasm"/>
    <property type="evidence" value="ECO:0007669"/>
    <property type="project" value="UniProtKB-SubCell"/>
</dbReference>
<dbReference type="GO" id="GO:0016597">
    <property type="term" value="F:amino acid binding"/>
    <property type="evidence" value="ECO:0007669"/>
    <property type="project" value="InterPro"/>
</dbReference>
<dbReference type="GO" id="GO:0004585">
    <property type="term" value="F:ornithine carbamoyltransferase activity"/>
    <property type="evidence" value="ECO:0007669"/>
    <property type="project" value="UniProtKB-UniRule"/>
</dbReference>
<dbReference type="GO" id="GO:0042450">
    <property type="term" value="P:arginine biosynthetic process via ornithine"/>
    <property type="evidence" value="ECO:0007669"/>
    <property type="project" value="TreeGrafter"/>
</dbReference>
<dbReference type="GO" id="GO:0019547">
    <property type="term" value="P:arginine catabolic process to ornithine"/>
    <property type="evidence" value="ECO:0007669"/>
    <property type="project" value="UniProtKB-UniRule"/>
</dbReference>
<dbReference type="GO" id="GO:0019240">
    <property type="term" value="P:citrulline biosynthetic process"/>
    <property type="evidence" value="ECO:0007669"/>
    <property type="project" value="TreeGrafter"/>
</dbReference>
<dbReference type="GO" id="GO:0006526">
    <property type="term" value="P:L-arginine biosynthetic process"/>
    <property type="evidence" value="ECO:0007669"/>
    <property type="project" value="UniProtKB-UniPathway"/>
</dbReference>
<dbReference type="FunFam" id="3.40.50.1370:FF:000008">
    <property type="entry name" value="Ornithine carbamoyltransferase"/>
    <property type="match status" value="1"/>
</dbReference>
<dbReference type="Gene3D" id="3.40.50.1370">
    <property type="entry name" value="Aspartate/ornithine carbamoyltransferase"/>
    <property type="match status" value="2"/>
</dbReference>
<dbReference type="HAMAP" id="MF_01109">
    <property type="entry name" value="OTCase"/>
    <property type="match status" value="1"/>
</dbReference>
<dbReference type="InterPro" id="IPR006132">
    <property type="entry name" value="Asp/Orn_carbamoyltranf_P-bd"/>
</dbReference>
<dbReference type="InterPro" id="IPR006130">
    <property type="entry name" value="Asp/Orn_carbamoylTrfase"/>
</dbReference>
<dbReference type="InterPro" id="IPR036901">
    <property type="entry name" value="Asp/Orn_carbamoylTrfase_sf"/>
</dbReference>
<dbReference type="InterPro" id="IPR006131">
    <property type="entry name" value="Asp_carbamoyltransf_Asp/Orn-bd"/>
</dbReference>
<dbReference type="InterPro" id="IPR002292">
    <property type="entry name" value="Orn/put_carbamltrans"/>
</dbReference>
<dbReference type="InterPro" id="IPR024904">
    <property type="entry name" value="OTCase_ArgI"/>
</dbReference>
<dbReference type="NCBIfam" id="TIGR00658">
    <property type="entry name" value="orni_carb_tr"/>
    <property type="match status" value="1"/>
</dbReference>
<dbReference type="NCBIfam" id="NF001986">
    <property type="entry name" value="PRK00779.1"/>
    <property type="match status" value="1"/>
</dbReference>
<dbReference type="PANTHER" id="PTHR45753">
    <property type="entry name" value="ORNITHINE CARBAMOYLTRANSFERASE, MITOCHONDRIAL"/>
    <property type="match status" value="1"/>
</dbReference>
<dbReference type="PANTHER" id="PTHR45753:SF3">
    <property type="entry name" value="ORNITHINE TRANSCARBAMYLASE, MITOCHONDRIAL"/>
    <property type="match status" value="1"/>
</dbReference>
<dbReference type="Pfam" id="PF00185">
    <property type="entry name" value="OTCace"/>
    <property type="match status" value="1"/>
</dbReference>
<dbReference type="Pfam" id="PF02729">
    <property type="entry name" value="OTCace_N"/>
    <property type="match status" value="1"/>
</dbReference>
<dbReference type="PRINTS" id="PR00100">
    <property type="entry name" value="AOTCASE"/>
</dbReference>
<dbReference type="PRINTS" id="PR00102">
    <property type="entry name" value="OTCASE"/>
</dbReference>
<dbReference type="SUPFAM" id="SSF53671">
    <property type="entry name" value="Aspartate/ornithine carbamoyltransferase"/>
    <property type="match status" value="1"/>
</dbReference>
<dbReference type="PROSITE" id="PS00097">
    <property type="entry name" value="CARBAMOYLTRANSFERASE"/>
    <property type="match status" value="1"/>
</dbReference>